<dbReference type="EC" id="2.3.1.21" evidence="13"/>
<dbReference type="EMBL" id="U09648">
    <property type="protein sequence ID" value="AAB60383.1"/>
    <property type="molecule type" value="mRNA"/>
</dbReference>
<dbReference type="EMBL" id="M58581">
    <property type="protein sequence ID" value="AAB59462.1"/>
    <property type="molecule type" value="mRNA"/>
</dbReference>
<dbReference type="EMBL" id="U09646">
    <property type="protein sequence ID" value="AAB60382.1"/>
    <property type="molecule type" value="Genomic_DNA"/>
</dbReference>
<dbReference type="EMBL" id="U09642">
    <property type="protein sequence ID" value="AAB60382.1"/>
    <property type="status" value="JOINED"/>
    <property type="molecule type" value="Genomic_DNA"/>
</dbReference>
<dbReference type="EMBL" id="U09643">
    <property type="protein sequence ID" value="AAB60382.1"/>
    <property type="status" value="JOINED"/>
    <property type="molecule type" value="Genomic_DNA"/>
</dbReference>
<dbReference type="EMBL" id="U09644">
    <property type="protein sequence ID" value="AAB60382.1"/>
    <property type="status" value="JOINED"/>
    <property type="molecule type" value="Genomic_DNA"/>
</dbReference>
<dbReference type="EMBL" id="U09645">
    <property type="protein sequence ID" value="AAB60382.1"/>
    <property type="status" value="JOINED"/>
    <property type="molecule type" value="Genomic_DNA"/>
</dbReference>
<dbReference type="EMBL" id="AK312687">
    <property type="protein sequence ID" value="BAG35567.1"/>
    <property type="molecule type" value="mRNA"/>
</dbReference>
<dbReference type="EMBL" id="AL606760">
    <property type="status" value="NOT_ANNOTATED_CDS"/>
    <property type="molecule type" value="Genomic_DNA"/>
</dbReference>
<dbReference type="EMBL" id="CH471059">
    <property type="protein sequence ID" value="EAX06753.1"/>
    <property type="molecule type" value="Genomic_DNA"/>
</dbReference>
<dbReference type="EMBL" id="BC002445">
    <property type="protein sequence ID" value="AAH02445.1"/>
    <property type="molecule type" value="mRNA"/>
</dbReference>
<dbReference type="EMBL" id="BC005172">
    <property type="protein sequence ID" value="AAH05172.1"/>
    <property type="molecule type" value="mRNA"/>
</dbReference>
<dbReference type="CCDS" id="CCDS575.1"/>
<dbReference type="PIR" id="A39018">
    <property type="entry name" value="A39018"/>
</dbReference>
<dbReference type="RefSeq" id="NP_000089.1">
    <property type="nucleotide sequence ID" value="NM_000098.3"/>
</dbReference>
<dbReference type="SMR" id="P23786"/>
<dbReference type="BioGRID" id="107767">
    <property type="interactions" value="77"/>
</dbReference>
<dbReference type="FunCoup" id="P23786">
    <property type="interactions" value="1512"/>
</dbReference>
<dbReference type="IntAct" id="P23786">
    <property type="interactions" value="37"/>
</dbReference>
<dbReference type="MINT" id="P23786"/>
<dbReference type="STRING" id="9606.ENSP00000360541"/>
<dbReference type="BindingDB" id="P23786"/>
<dbReference type="ChEMBL" id="CHEMBL3238"/>
<dbReference type="DrugBank" id="DB00583">
    <property type="generic name" value="Levocarnitine"/>
</dbReference>
<dbReference type="DrugBank" id="DB01074">
    <property type="generic name" value="Perhexiline"/>
</dbReference>
<dbReference type="DrugCentral" id="P23786"/>
<dbReference type="SwissLipids" id="SLP:000001044"/>
<dbReference type="GlyGen" id="P23786">
    <property type="glycosylation" value="2 sites, 1 O-linked glycan (1 site)"/>
</dbReference>
<dbReference type="iPTMnet" id="P23786"/>
<dbReference type="MetOSite" id="P23786"/>
<dbReference type="PhosphoSitePlus" id="P23786"/>
<dbReference type="SwissPalm" id="P23786"/>
<dbReference type="BioMuta" id="CPT2"/>
<dbReference type="DMDM" id="416836"/>
<dbReference type="REPRODUCTION-2DPAGE" id="IPI00012912"/>
<dbReference type="jPOST" id="P23786"/>
<dbReference type="MassIVE" id="P23786"/>
<dbReference type="PaxDb" id="9606-ENSP00000360541"/>
<dbReference type="PeptideAtlas" id="P23786"/>
<dbReference type="ProteomicsDB" id="54164"/>
<dbReference type="Pumba" id="P23786"/>
<dbReference type="Antibodypedia" id="33067">
    <property type="antibodies" value="493 antibodies from 35 providers"/>
</dbReference>
<dbReference type="DNASU" id="1376"/>
<dbReference type="Ensembl" id="ENST00000371486.4">
    <property type="protein sequence ID" value="ENSP00000360541.3"/>
    <property type="gene ID" value="ENSG00000157184.7"/>
</dbReference>
<dbReference type="GeneID" id="1376"/>
<dbReference type="KEGG" id="hsa:1376"/>
<dbReference type="MANE-Select" id="ENST00000371486.4">
    <property type="protein sequence ID" value="ENSP00000360541.3"/>
    <property type="RefSeq nucleotide sequence ID" value="NM_000098.3"/>
    <property type="RefSeq protein sequence ID" value="NP_000089.1"/>
</dbReference>
<dbReference type="UCSC" id="uc001cvb.4">
    <property type="organism name" value="human"/>
</dbReference>
<dbReference type="AGR" id="HGNC:2330"/>
<dbReference type="CTD" id="1376"/>
<dbReference type="DisGeNET" id="1376"/>
<dbReference type="GeneCards" id="CPT2"/>
<dbReference type="GeneReviews" id="CPT2"/>
<dbReference type="HGNC" id="HGNC:2330">
    <property type="gene designation" value="CPT2"/>
</dbReference>
<dbReference type="HPA" id="ENSG00000157184">
    <property type="expression patterns" value="Tissue enhanced (liver)"/>
</dbReference>
<dbReference type="MalaCards" id="CPT2"/>
<dbReference type="MIM" id="255110">
    <property type="type" value="phenotype"/>
</dbReference>
<dbReference type="MIM" id="600649">
    <property type="type" value="phenotype"/>
</dbReference>
<dbReference type="MIM" id="600650">
    <property type="type" value="gene"/>
</dbReference>
<dbReference type="MIM" id="608836">
    <property type="type" value="phenotype"/>
</dbReference>
<dbReference type="MIM" id="614212">
    <property type="type" value="phenotype"/>
</dbReference>
<dbReference type="neXtProt" id="NX_P23786"/>
<dbReference type="OpenTargets" id="ENSG00000157184"/>
<dbReference type="Orphanet" id="263524">
    <property type="disease" value="Acute necrotizing encephalopathy of childhood"/>
</dbReference>
<dbReference type="Orphanet" id="228302">
    <property type="disease" value="Carnitine palmitoyl transferase II deficiency, myopathic form"/>
</dbReference>
<dbReference type="Orphanet" id="228308">
    <property type="disease" value="Carnitine palmitoyl transferase II deficiency, neonatal form"/>
</dbReference>
<dbReference type="Orphanet" id="228305">
    <property type="disease" value="Carnitine palmitoyl transferase II deficiency, severe infantile form"/>
</dbReference>
<dbReference type="PharmGKB" id="PA26849"/>
<dbReference type="VEuPathDB" id="HostDB:ENSG00000157184"/>
<dbReference type="eggNOG" id="KOG3719">
    <property type="taxonomic scope" value="Eukaryota"/>
</dbReference>
<dbReference type="GeneTree" id="ENSGT01130000278297"/>
<dbReference type="HOGENOM" id="CLU_013513_4_2_1"/>
<dbReference type="InParanoid" id="P23786"/>
<dbReference type="OrthoDB" id="240216at2759"/>
<dbReference type="PAN-GO" id="P23786">
    <property type="GO annotations" value="3 GO annotations based on evolutionary models"/>
</dbReference>
<dbReference type="PhylomeDB" id="P23786"/>
<dbReference type="TreeFam" id="TF315202"/>
<dbReference type="BioCyc" id="MetaCyc:HS08187-MONOMER"/>
<dbReference type="BRENDA" id="2.3.1.21">
    <property type="organism ID" value="2681"/>
</dbReference>
<dbReference type="PathwayCommons" id="P23786"/>
<dbReference type="Reactome" id="R-HSA-1989781">
    <property type="pathway name" value="PPARA activates gene expression"/>
</dbReference>
<dbReference type="Reactome" id="R-HSA-200425">
    <property type="pathway name" value="Carnitine shuttle"/>
</dbReference>
<dbReference type="SignaLink" id="P23786"/>
<dbReference type="UniPathway" id="UPA00659"/>
<dbReference type="BioGRID-ORCS" id="1376">
    <property type="hits" value="17 hits in 1173 CRISPR screens"/>
</dbReference>
<dbReference type="ChiTaRS" id="CPT2">
    <property type="organism name" value="human"/>
</dbReference>
<dbReference type="GeneWiki" id="Carnitine_palmitoyltransferase_II"/>
<dbReference type="GenomeRNAi" id="1376"/>
<dbReference type="Pharos" id="P23786">
    <property type="development level" value="Tchem"/>
</dbReference>
<dbReference type="PRO" id="PR:P23786"/>
<dbReference type="Proteomes" id="UP000005640">
    <property type="component" value="Chromosome 1"/>
</dbReference>
<dbReference type="RNAct" id="P23786">
    <property type="molecule type" value="protein"/>
</dbReference>
<dbReference type="Bgee" id="ENSG00000157184">
    <property type="expression patterns" value="Expressed in mucosa of transverse colon and 177 other cell types or tissues"/>
</dbReference>
<dbReference type="ExpressionAtlas" id="P23786">
    <property type="expression patterns" value="baseline and differential"/>
</dbReference>
<dbReference type="GO" id="GO:0005743">
    <property type="term" value="C:mitochondrial inner membrane"/>
    <property type="evidence" value="ECO:0000304"/>
    <property type="project" value="Reactome"/>
</dbReference>
<dbReference type="GO" id="GO:0005759">
    <property type="term" value="C:mitochondrial matrix"/>
    <property type="evidence" value="ECO:0007669"/>
    <property type="project" value="Ensembl"/>
</dbReference>
<dbReference type="GO" id="GO:0005739">
    <property type="term" value="C:mitochondrion"/>
    <property type="evidence" value="ECO:0000314"/>
    <property type="project" value="HPA"/>
</dbReference>
<dbReference type="GO" id="GO:0005730">
    <property type="term" value="C:nucleolus"/>
    <property type="evidence" value="ECO:0000314"/>
    <property type="project" value="HPA"/>
</dbReference>
<dbReference type="GO" id="GO:0005654">
    <property type="term" value="C:nucleoplasm"/>
    <property type="evidence" value="ECO:0000314"/>
    <property type="project" value="HPA"/>
</dbReference>
<dbReference type="GO" id="GO:0016746">
    <property type="term" value="F:acyltransferase activity"/>
    <property type="evidence" value="ECO:0000314"/>
    <property type="project" value="UniProtKB"/>
</dbReference>
<dbReference type="GO" id="GO:0008458">
    <property type="term" value="F:carnitine O-octanoyltransferase activity"/>
    <property type="evidence" value="ECO:0007669"/>
    <property type="project" value="RHEA"/>
</dbReference>
<dbReference type="GO" id="GO:0004095">
    <property type="term" value="F:carnitine O-palmitoyltransferase activity"/>
    <property type="evidence" value="ECO:0000314"/>
    <property type="project" value="UniProtKB"/>
</dbReference>
<dbReference type="GO" id="GO:0009437">
    <property type="term" value="P:carnitine metabolic process"/>
    <property type="evidence" value="ECO:0000314"/>
    <property type="project" value="UniProtKB"/>
</dbReference>
<dbReference type="GO" id="GO:0006853">
    <property type="term" value="P:carnitine shuttle"/>
    <property type="evidence" value="ECO:0000304"/>
    <property type="project" value="Reactome"/>
</dbReference>
<dbReference type="GO" id="GO:0006635">
    <property type="term" value="P:fatty acid beta-oxidation"/>
    <property type="evidence" value="ECO:0000314"/>
    <property type="project" value="UniProtKB"/>
</dbReference>
<dbReference type="GO" id="GO:0001701">
    <property type="term" value="P:in utero embryonic development"/>
    <property type="evidence" value="ECO:0007669"/>
    <property type="project" value="Ensembl"/>
</dbReference>
<dbReference type="GO" id="GO:0001676">
    <property type="term" value="P:long-chain fatty acid metabolic process"/>
    <property type="evidence" value="ECO:0000314"/>
    <property type="project" value="UniProtKB"/>
</dbReference>
<dbReference type="GO" id="GO:0120162">
    <property type="term" value="P:positive regulation of cold-induced thermogenesis"/>
    <property type="evidence" value="ECO:0000250"/>
    <property type="project" value="YuBioLab"/>
</dbReference>
<dbReference type="FunFam" id="1.20.1280.180:FF:000001">
    <property type="entry name" value="Carnitine O-palmitoyltransferase 2, mitochondrial"/>
    <property type="match status" value="1"/>
</dbReference>
<dbReference type="FunFam" id="1.10.275.20:FF:000001">
    <property type="entry name" value="carnitine O-palmitoyltransferase 2, mitochondrial"/>
    <property type="match status" value="1"/>
</dbReference>
<dbReference type="FunFam" id="3.30.559.10:FF:000010">
    <property type="entry name" value="carnitine O-palmitoyltransferase 2, mitochondrial"/>
    <property type="match status" value="1"/>
</dbReference>
<dbReference type="Gene3D" id="1.20.1280.180">
    <property type="match status" value="1"/>
</dbReference>
<dbReference type="Gene3D" id="3.30.559.10">
    <property type="entry name" value="Chloramphenicol acetyltransferase-like domain"/>
    <property type="match status" value="1"/>
</dbReference>
<dbReference type="Gene3D" id="1.10.275.20">
    <property type="entry name" value="Choline/Carnitine o-acyltransferase"/>
    <property type="match status" value="1"/>
</dbReference>
<dbReference type="Gene3D" id="3.30.559.70">
    <property type="entry name" value="Choline/Carnitine o-acyltransferase, domain 2"/>
    <property type="match status" value="1"/>
</dbReference>
<dbReference type="InterPro" id="IPR000542">
    <property type="entry name" value="Carn_acyl_trans"/>
</dbReference>
<dbReference type="InterPro" id="IPR042572">
    <property type="entry name" value="Carn_acyl_trans_N"/>
</dbReference>
<dbReference type="InterPro" id="IPR023213">
    <property type="entry name" value="CAT-like_dom_sf"/>
</dbReference>
<dbReference type="InterPro" id="IPR039551">
    <property type="entry name" value="Cho/carn_acyl_trans"/>
</dbReference>
<dbReference type="InterPro" id="IPR042231">
    <property type="entry name" value="Cho/carn_acyl_trans_2"/>
</dbReference>
<dbReference type="PANTHER" id="PTHR22589">
    <property type="entry name" value="CARNITINE O-ACYLTRANSFERASE"/>
    <property type="match status" value="1"/>
</dbReference>
<dbReference type="PANTHER" id="PTHR22589:SF51">
    <property type="entry name" value="CARNITINE O-PALMITOYLTRANSFERASE 2, MITOCHONDRIAL"/>
    <property type="match status" value="1"/>
</dbReference>
<dbReference type="Pfam" id="PF00755">
    <property type="entry name" value="Carn_acyltransf"/>
    <property type="match status" value="1"/>
</dbReference>
<dbReference type="SUPFAM" id="SSF52777">
    <property type="entry name" value="CoA-dependent acyltransferases"/>
    <property type="match status" value="2"/>
</dbReference>
<dbReference type="PROSITE" id="PS00439">
    <property type="entry name" value="ACYLTRANSF_C_1"/>
    <property type="match status" value="1"/>
</dbReference>
<dbReference type="PROSITE" id="PS00440">
    <property type="entry name" value="ACYLTRANSF_C_2"/>
    <property type="match status" value="1"/>
</dbReference>
<feature type="transit peptide" description="Mitochondrion">
    <location>
        <begin position="1"/>
        <end position="25"/>
    </location>
</feature>
<feature type="chain" id="PRO_0000004424" description="Carnitine O-palmitoyltransferase 2, mitochondrial">
    <location>
        <begin position="26"/>
        <end position="658"/>
    </location>
</feature>
<feature type="topological domain" description="Mitochondrial matrix" evidence="1">
    <location>
        <begin position="26"/>
        <end position="178"/>
    </location>
</feature>
<feature type="intramembrane region" description="Note=Mitochondrial inner membrane" evidence="1">
    <location>
        <begin position="179"/>
        <end position="208"/>
    </location>
</feature>
<feature type="topological domain" description="Mitochondrial matrix" evidence="1">
    <location>
        <begin position="209"/>
        <end position="658"/>
    </location>
</feature>
<feature type="active site" description="Proton acceptor" evidence="1">
    <location>
        <position position="372"/>
    </location>
</feature>
<feature type="binding site" evidence="1">
    <location>
        <begin position="452"/>
        <end position="464"/>
    </location>
    <ligand>
        <name>CoA</name>
        <dbReference type="ChEBI" id="CHEBI:57287"/>
    </ligand>
</feature>
<feature type="binding site" evidence="1">
    <location>
        <position position="486"/>
    </location>
    <ligand>
        <name>(R)-carnitine</name>
        <dbReference type="ChEBI" id="CHEBI:16347"/>
    </ligand>
</feature>
<feature type="binding site" evidence="1">
    <location>
        <position position="488"/>
    </location>
    <ligand>
        <name>(R)-carnitine</name>
        <dbReference type="ChEBI" id="CHEBI:16347"/>
    </ligand>
</feature>
<feature type="binding site" evidence="1">
    <location>
        <position position="499"/>
    </location>
    <ligand>
        <name>(R)-carnitine</name>
        <dbReference type="ChEBI" id="CHEBI:16347"/>
    </ligand>
</feature>
<feature type="modified residue" description="N6-succinyllysine" evidence="2">
    <location>
        <position position="69"/>
    </location>
</feature>
<feature type="modified residue" description="N6-acetyllysine" evidence="2">
    <location>
        <position position="79"/>
    </location>
</feature>
<feature type="modified residue" description="N6-succinyllysine" evidence="2">
    <location>
        <position position="85"/>
    </location>
</feature>
<feature type="modified residue" description="N6-acetyllysine; alternate" evidence="2">
    <location>
        <position position="239"/>
    </location>
</feature>
<feature type="modified residue" description="N6-succinyllysine; alternate" evidence="2">
    <location>
        <position position="239"/>
    </location>
</feature>
<feature type="modified residue" description="N6-acetyllysine" evidence="2">
    <location>
        <position position="305"/>
    </location>
</feature>
<feature type="modified residue" description="N6-succinyllysine" evidence="2">
    <location>
        <position position="424"/>
    </location>
</feature>
<feature type="modified residue" description="N6-succinyllysine" evidence="2">
    <location>
        <position position="439"/>
    </location>
</feature>
<feature type="modified residue" description="N6-acetyllysine; alternate" evidence="2">
    <location>
        <position position="510"/>
    </location>
</feature>
<feature type="modified residue" description="N6-succinyllysine; alternate" evidence="2">
    <location>
        <position position="510"/>
    </location>
</feature>
<feature type="modified residue" description="N6-acetyllysine; alternate" evidence="2">
    <location>
        <position position="544"/>
    </location>
</feature>
<feature type="modified residue" description="N6-succinyllysine; alternate" evidence="2">
    <location>
        <position position="544"/>
    </location>
</feature>
<feature type="sequence variant" id="VAR_001391" description="In CPT2D; muscular type; dbSNP:rs28936375." evidence="9 16">
    <original>P</original>
    <variation>H</variation>
    <location>
        <position position="50"/>
    </location>
</feature>
<feature type="sequence variant" id="VAR_001392" description="In CPT2D; muscular form; frequent mutation; dbSNP:rs74315294." evidence="8 9 17 20">
    <original>S</original>
    <variation>L</variation>
    <location>
        <position position="113"/>
    </location>
</feature>
<feature type="sequence variant" id="VAR_020540" description="In CPT2D; dbSNP:rs515726177." evidence="5 20">
    <original>R</original>
    <variation>Q</variation>
    <location>
        <position position="151"/>
    </location>
</feature>
<feature type="sequence variant" id="VAR_001393" description="In CPT2D; muscular type; dbSNP:rs28936674." evidence="19">
    <original>E</original>
    <variation>K</variation>
    <location>
        <position position="174"/>
    </location>
</feature>
<feature type="sequence variant" id="VAR_020541" description="In CPT2D." evidence="5">
    <original>Y</original>
    <variation>D</variation>
    <location>
        <position position="210"/>
    </location>
</feature>
<feature type="sequence variant" id="VAR_037976" description="In CPT2D; dbSNP:rs74315300." evidence="9">
    <original>D</original>
    <variation>G</variation>
    <location>
        <position position="213"/>
    </location>
</feature>
<feature type="sequence variant" id="VAR_007966" description="In CPT2D; dbSNP:rs515726174." evidence="22">
    <original>M</original>
    <variation>T</variation>
    <location>
        <position position="214"/>
    </location>
</feature>
<feature type="sequence variant" id="VAR_007967" description="In CPT2D; dbSNP:rs74315298." evidence="20 21">
    <original>P</original>
    <variation>L</variation>
    <location>
        <position position="227"/>
    </location>
</feature>
<feature type="sequence variant" id="VAR_020542" description="In CPT2D; dbSNP:rs764849762." evidence="5 6">
    <original>R</original>
    <variation>Q</variation>
    <location>
        <position position="296"/>
    </location>
</feature>
<feature type="sequence variant" id="VAR_001394" description="Risk factor for IIAE4; 3-fold decrease of affinity for L-carnitine; lower thermal stability compared to wild-type; dbSNP:rs2229291." evidence="10 12 14 19">
    <original>F</original>
    <variation>C</variation>
    <location>
        <position position="352"/>
    </location>
</feature>
<feature type="sequence variant" id="VAR_001395" description="Risk factor for IIAE4; no effect on activity; does not affect affinity for L-carnitine; lower thermal stability compared to wild-type; dbSNP:rs1799821." evidence="5 7 8 12 19 20">
    <original>V</original>
    <variation>I</variation>
    <location>
        <position position="368"/>
    </location>
</feature>
<feature type="sequence variant" id="VAR_001396" description="In CPT2D; hepatocardiomuscular form; dbSNP:rs74315295." evidence="19">
    <original>F</original>
    <variation>Y</variation>
    <location>
        <position position="383"/>
    </location>
</feature>
<feature type="sequence variant" id="VAR_007968" description="In CPT2D; dbSNP:rs74315297." evidence="22">
    <original>F</original>
    <variation>L</variation>
    <location>
        <position position="448"/>
    </location>
</feature>
<feature type="sequence variant" id="VAR_007969" description="In CPT2D; dbSNP:rs749895856." evidence="22">
    <original>Y</original>
    <variation>F</variation>
    <location>
        <position position="479"/>
    </location>
</feature>
<feature type="sequence variant" id="VAR_007970" description="In CPT2D; dbSNP:rs74315296." evidence="3">
    <original>R</original>
    <variation>C</variation>
    <location>
        <position position="503"/>
    </location>
</feature>
<feature type="sequence variant" id="VAR_066567" description="In a patient with IIAE4; dbSNP:rs368311455." evidence="12">
    <original>P</original>
    <variation>L</variation>
    <location>
        <position position="504"/>
    </location>
</feature>
<feature type="sequence variant" id="VAR_007971" description="In CPT2D; dbSNP:rs186044004." evidence="3">
    <original>G</original>
    <variation>D</variation>
    <location>
        <position position="549"/>
    </location>
</feature>
<feature type="sequence variant" id="VAR_020543" description="In CPT2D." evidence="20">
    <original>Q</original>
    <variation>R</variation>
    <location>
        <position position="550"/>
    </location>
</feature>
<feature type="sequence variant" id="VAR_001397" description="In CPT2D; dbSNP:rs28936376." evidence="16">
    <original>D</original>
    <variation>N</variation>
    <location>
        <position position="553"/>
    </location>
</feature>
<feature type="sequence variant" id="VAR_011741" description="In dbSNP:rs1871748.">
    <original>S</original>
    <variation>C</variation>
    <location>
        <position position="588"/>
    </location>
</feature>
<feature type="sequence variant" id="VAR_020544" description="In CPT2D; dbSNP:rs1645443101." evidence="5">
    <original>G</original>
    <variation>R</variation>
    <location>
        <position position="600"/>
    </location>
</feature>
<feature type="sequence variant" id="VAR_020545" description="In CPT2D; dbSNP:rs1645443275." evidence="20">
    <original>P</original>
    <variation>S</variation>
    <location>
        <position position="604"/>
    </location>
</feature>
<feature type="sequence variant" id="VAR_066568" description="In a patient with IIAE4; dbSNP:rs751557097." evidence="12">
    <original>V</original>
    <variation>L</variation>
    <location>
        <position position="605"/>
    </location>
</feature>
<feature type="sequence variant" id="VAR_001398" description="In CPT2DI; hepatocardiomuscular form; dbSNP:rs28936673." evidence="18">
    <original>Y</original>
    <variation>S</variation>
    <location>
        <position position="628"/>
    </location>
</feature>
<feature type="sequence variant" id="VAR_001399" description="In CPT2DI and CPT2D; early-onset hepatocardiomuscular form; dbSNP:rs74315293." evidence="7 15">
    <original>R</original>
    <variation>C</variation>
    <location>
        <position position="631"/>
    </location>
</feature>
<feature type="sequence variant" id="VAR_001400" description="Confirmed at protein level; dbSNP:rs1799822." evidence="5 7 8 11 12 19 20">
    <original>M</original>
    <variation>V</variation>
    <location>
        <position position="647"/>
    </location>
</feature>
<proteinExistence type="evidence at protein level"/>
<keyword id="KW-0007">Acetylation</keyword>
<keyword id="KW-0012">Acyltransferase</keyword>
<keyword id="KW-0903">Direct protein sequencing</keyword>
<keyword id="KW-0225">Disease variant</keyword>
<keyword id="KW-0276">Fatty acid metabolism</keyword>
<keyword id="KW-0443">Lipid metabolism</keyword>
<keyword id="KW-0472">Membrane</keyword>
<keyword id="KW-0496">Mitochondrion</keyword>
<keyword id="KW-0999">Mitochondrion inner membrane</keyword>
<keyword id="KW-1267">Proteomics identification</keyword>
<keyword id="KW-1185">Reference proteome</keyword>
<keyword id="KW-0808">Transferase</keyword>
<keyword id="KW-0809">Transit peptide</keyword>
<keyword id="KW-0813">Transport</keyword>
<accession>P23786</accession>
<accession>B2R6S0</accession>
<accession>Q5SW68</accession>
<accession>Q9BQ26</accession>
<sequence length="658" mass="73777">MVPRLLLRAWPRGPAVGPGAPSRPLSAGSGPGQYLQRSIVPTMHYQDSLPRLPIPKLEDTIRRYLSAQKPLLNDGQFRKTEQFCKSFENGIGKELHEQLVALDKQNKHTSYISGPWFDMYLSARDSVVLNFNPFMAFNPDPKSEYNDQLTRATNMTVSAIRFLKTLRAGLLEPEVFHLNPAKSDTITFKRLIRFVPSSLSWYGAYLVNAYPLDMSQYFRLFNSTRLPKPSRDELFTDDKARHLLVLRKGNFYIFDVLDQDGNIVSPSEIQAHLKYILSDSSPAPEFPLAYLTSENRDIWAELRQKLMSSGNEESLRKVDSAVFCLCLDDFPIKDLVHLSHNMLHGDGTNRWFDKSFNLIIAKDGSTAVHFEHSWGDGVAVLRFFNEVFKDSTQTPAVTPQSQPATTDSTVTVQKLNFELTDALKTGITAAKEKFDATMKTLTIDCVQFQRGGKEFLKKQKLSPDAVAQLAFQMAFLRQYGQTVATYESCSTAAFKHGRTETIRPASVYTKRCSEAFVREPSRHSAGELQQMMVECSKYHGQLTKEAAMGQGFDRHLFALRHLAAAKGIILPELYLDPAYGQINHNVLSTSTLSSPAVNLGGFAPVVSDGFGVGYAVHDNWIGCNVSSYPGRNAREFLQCVEKALEDMFDALEGKSIKS</sequence>
<reference key="1">
    <citation type="journal article" date="1991" name="Proc. Natl. Acad. Sci. U.S.A.">
        <title>cDNA cloning, sequence analysis, and chromosomal localization of the gene for human carnitine palmitoyltransferase.</title>
        <authorList>
            <person name="Finocchiaro G."/>
            <person name="Taroni F."/>
            <person name="Rocchi M."/>
            <person name="Martin A.L."/>
            <person name="Colombo I."/>
            <person name="Tarelli G.T."/>
            <person name="Didonato S."/>
        </authorList>
    </citation>
    <scope>NUCLEOTIDE SEQUENCE [MRNA]</scope>
    <scope>PARTIAL PROTEIN SEQUENCE</scope>
    <source>
        <tissue>Liver</tissue>
    </source>
</reference>
<reference key="2">
    <citation type="journal article" date="1991" name="Proc. Natl. Acad. Sci. U.S.A.">
        <authorList>
            <person name="Finocchiaro G."/>
            <person name="Taroni F."/>
            <person name="Rocchi M."/>
            <person name="Martin A.L."/>
            <person name="Colombo I."/>
            <person name="Tarelli G.T."/>
            <person name="Didonato S."/>
        </authorList>
    </citation>
    <scope>ERRATUM OF PUBMED:1988962</scope>
    <scope>SEQUENCE REVISION TO 283 AND 375</scope>
</reference>
<reference key="3">
    <citation type="journal article" date="1995" name="Hum. Mol. Genet.">
        <title>Carnitine palmitoyltransferase II deficiency: structure of the gene and characterization of two novel disease-causing mutations.</title>
        <authorList>
            <person name="Verderio E."/>
            <person name="Cavadini P."/>
            <person name="Montermini L."/>
            <person name="Wang H."/>
            <person name="Lamantea E."/>
            <person name="Finocchiaro G."/>
            <person name="Didonato S."/>
            <person name="Gellera C."/>
            <person name="Taroni F."/>
        </authorList>
    </citation>
    <scope>NUCLEOTIDE SEQUENCE [GENOMIC DNA]</scope>
    <scope>VARIANTS CPT2D DEFICIENCY HIS-50 AND ASN-553</scope>
</reference>
<reference key="4">
    <citation type="journal article" date="2004" name="Nat. Genet.">
        <title>Complete sequencing and characterization of 21,243 full-length human cDNAs.</title>
        <authorList>
            <person name="Ota T."/>
            <person name="Suzuki Y."/>
            <person name="Nishikawa T."/>
            <person name="Otsuki T."/>
            <person name="Sugiyama T."/>
            <person name="Irie R."/>
            <person name="Wakamatsu A."/>
            <person name="Hayashi K."/>
            <person name="Sato H."/>
            <person name="Nagai K."/>
            <person name="Kimura K."/>
            <person name="Makita H."/>
            <person name="Sekine M."/>
            <person name="Obayashi M."/>
            <person name="Nishi T."/>
            <person name="Shibahara T."/>
            <person name="Tanaka T."/>
            <person name="Ishii S."/>
            <person name="Yamamoto J."/>
            <person name="Saito K."/>
            <person name="Kawai Y."/>
            <person name="Isono Y."/>
            <person name="Nakamura Y."/>
            <person name="Nagahari K."/>
            <person name="Murakami K."/>
            <person name="Yasuda T."/>
            <person name="Iwayanagi T."/>
            <person name="Wagatsuma M."/>
            <person name="Shiratori A."/>
            <person name="Sudo H."/>
            <person name="Hosoiri T."/>
            <person name="Kaku Y."/>
            <person name="Kodaira H."/>
            <person name="Kondo H."/>
            <person name="Sugawara M."/>
            <person name="Takahashi M."/>
            <person name="Kanda K."/>
            <person name="Yokoi T."/>
            <person name="Furuya T."/>
            <person name="Kikkawa E."/>
            <person name="Omura Y."/>
            <person name="Abe K."/>
            <person name="Kamihara K."/>
            <person name="Katsuta N."/>
            <person name="Sato K."/>
            <person name="Tanikawa M."/>
            <person name="Yamazaki M."/>
            <person name="Ninomiya K."/>
            <person name="Ishibashi T."/>
            <person name="Yamashita H."/>
            <person name="Murakawa K."/>
            <person name="Fujimori K."/>
            <person name="Tanai H."/>
            <person name="Kimata M."/>
            <person name="Watanabe M."/>
            <person name="Hiraoka S."/>
            <person name="Chiba Y."/>
            <person name="Ishida S."/>
            <person name="Ono Y."/>
            <person name="Takiguchi S."/>
            <person name="Watanabe S."/>
            <person name="Yosida M."/>
            <person name="Hotuta T."/>
            <person name="Kusano J."/>
            <person name="Kanehori K."/>
            <person name="Takahashi-Fujii A."/>
            <person name="Hara H."/>
            <person name="Tanase T.-O."/>
            <person name="Nomura Y."/>
            <person name="Togiya S."/>
            <person name="Komai F."/>
            <person name="Hara R."/>
            <person name="Takeuchi K."/>
            <person name="Arita M."/>
            <person name="Imose N."/>
            <person name="Musashino K."/>
            <person name="Yuuki H."/>
            <person name="Oshima A."/>
            <person name="Sasaki N."/>
            <person name="Aotsuka S."/>
            <person name="Yoshikawa Y."/>
            <person name="Matsunawa H."/>
            <person name="Ichihara T."/>
            <person name="Shiohata N."/>
            <person name="Sano S."/>
            <person name="Moriya S."/>
            <person name="Momiyama H."/>
            <person name="Satoh N."/>
            <person name="Takami S."/>
            <person name="Terashima Y."/>
            <person name="Suzuki O."/>
            <person name="Nakagawa S."/>
            <person name="Senoh A."/>
            <person name="Mizoguchi H."/>
            <person name="Goto Y."/>
            <person name="Shimizu F."/>
            <person name="Wakebe H."/>
            <person name="Hishigaki H."/>
            <person name="Watanabe T."/>
            <person name="Sugiyama A."/>
            <person name="Takemoto M."/>
            <person name="Kawakami B."/>
            <person name="Yamazaki M."/>
            <person name="Watanabe K."/>
            <person name="Kumagai A."/>
            <person name="Itakura S."/>
            <person name="Fukuzumi Y."/>
            <person name="Fujimori Y."/>
            <person name="Komiyama M."/>
            <person name="Tashiro H."/>
            <person name="Tanigami A."/>
            <person name="Fujiwara T."/>
            <person name="Ono T."/>
            <person name="Yamada K."/>
            <person name="Fujii Y."/>
            <person name="Ozaki K."/>
            <person name="Hirao M."/>
            <person name="Ohmori Y."/>
            <person name="Kawabata A."/>
            <person name="Hikiji T."/>
            <person name="Kobatake N."/>
            <person name="Inagaki H."/>
            <person name="Ikema Y."/>
            <person name="Okamoto S."/>
            <person name="Okitani R."/>
            <person name="Kawakami T."/>
            <person name="Noguchi S."/>
            <person name="Itoh T."/>
            <person name="Shigeta K."/>
            <person name="Senba T."/>
            <person name="Matsumura K."/>
            <person name="Nakajima Y."/>
            <person name="Mizuno T."/>
            <person name="Morinaga M."/>
            <person name="Sasaki M."/>
            <person name="Togashi T."/>
            <person name="Oyama M."/>
            <person name="Hata H."/>
            <person name="Watanabe M."/>
            <person name="Komatsu T."/>
            <person name="Mizushima-Sugano J."/>
            <person name="Satoh T."/>
            <person name="Shirai Y."/>
            <person name="Takahashi Y."/>
            <person name="Nakagawa K."/>
            <person name="Okumura K."/>
            <person name="Nagase T."/>
            <person name="Nomura N."/>
            <person name="Kikuchi H."/>
            <person name="Masuho Y."/>
            <person name="Yamashita R."/>
            <person name="Nakai K."/>
            <person name="Yada T."/>
            <person name="Nakamura Y."/>
            <person name="Ohara O."/>
            <person name="Isogai T."/>
            <person name="Sugano S."/>
        </authorList>
    </citation>
    <scope>NUCLEOTIDE SEQUENCE [LARGE SCALE MRNA]</scope>
</reference>
<reference key="5">
    <citation type="journal article" date="2006" name="Nature">
        <title>The DNA sequence and biological annotation of human chromosome 1.</title>
        <authorList>
            <person name="Gregory S.G."/>
            <person name="Barlow K.F."/>
            <person name="McLay K.E."/>
            <person name="Kaul R."/>
            <person name="Swarbreck D."/>
            <person name="Dunham A."/>
            <person name="Scott C.E."/>
            <person name="Howe K.L."/>
            <person name="Woodfine K."/>
            <person name="Spencer C.C.A."/>
            <person name="Jones M.C."/>
            <person name="Gillson C."/>
            <person name="Searle S."/>
            <person name="Zhou Y."/>
            <person name="Kokocinski F."/>
            <person name="McDonald L."/>
            <person name="Evans R."/>
            <person name="Phillips K."/>
            <person name="Atkinson A."/>
            <person name="Cooper R."/>
            <person name="Jones C."/>
            <person name="Hall R.E."/>
            <person name="Andrews T.D."/>
            <person name="Lloyd C."/>
            <person name="Ainscough R."/>
            <person name="Almeida J.P."/>
            <person name="Ambrose K.D."/>
            <person name="Anderson F."/>
            <person name="Andrew R.W."/>
            <person name="Ashwell R.I.S."/>
            <person name="Aubin K."/>
            <person name="Babbage A.K."/>
            <person name="Bagguley C.L."/>
            <person name="Bailey J."/>
            <person name="Beasley H."/>
            <person name="Bethel G."/>
            <person name="Bird C.P."/>
            <person name="Bray-Allen S."/>
            <person name="Brown J.Y."/>
            <person name="Brown A.J."/>
            <person name="Buckley D."/>
            <person name="Burton J."/>
            <person name="Bye J."/>
            <person name="Carder C."/>
            <person name="Chapman J.C."/>
            <person name="Clark S.Y."/>
            <person name="Clarke G."/>
            <person name="Clee C."/>
            <person name="Cobley V."/>
            <person name="Collier R.E."/>
            <person name="Corby N."/>
            <person name="Coville G.J."/>
            <person name="Davies J."/>
            <person name="Deadman R."/>
            <person name="Dunn M."/>
            <person name="Earthrowl M."/>
            <person name="Ellington A.G."/>
            <person name="Errington H."/>
            <person name="Frankish A."/>
            <person name="Frankland J."/>
            <person name="French L."/>
            <person name="Garner P."/>
            <person name="Garnett J."/>
            <person name="Gay L."/>
            <person name="Ghori M.R.J."/>
            <person name="Gibson R."/>
            <person name="Gilby L.M."/>
            <person name="Gillett W."/>
            <person name="Glithero R.J."/>
            <person name="Grafham D.V."/>
            <person name="Griffiths C."/>
            <person name="Griffiths-Jones S."/>
            <person name="Grocock R."/>
            <person name="Hammond S."/>
            <person name="Harrison E.S.I."/>
            <person name="Hart E."/>
            <person name="Haugen E."/>
            <person name="Heath P.D."/>
            <person name="Holmes S."/>
            <person name="Holt K."/>
            <person name="Howden P.J."/>
            <person name="Hunt A.R."/>
            <person name="Hunt S.E."/>
            <person name="Hunter G."/>
            <person name="Isherwood J."/>
            <person name="James R."/>
            <person name="Johnson C."/>
            <person name="Johnson D."/>
            <person name="Joy A."/>
            <person name="Kay M."/>
            <person name="Kershaw J.K."/>
            <person name="Kibukawa M."/>
            <person name="Kimberley A.M."/>
            <person name="King A."/>
            <person name="Knights A.J."/>
            <person name="Lad H."/>
            <person name="Laird G."/>
            <person name="Lawlor S."/>
            <person name="Leongamornlert D.A."/>
            <person name="Lloyd D.M."/>
            <person name="Loveland J."/>
            <person name="Lovell J."/>
            <person name="Lush M.J."/>
            <person name="Lyne R."/>
            <person name="Martin S."/>
            <person name="Mashreghi-Mohammadi M."/>
            <person name="Matthews L."/>
            <person name="Matthews N.S.W."/>
            <person name="McLaren S."/>
            <person name="Milne S."/>
            <person name="Mistry S."/>
            <person name="Moore M.J.F."/>
            <person name="Nickerson T."/>
            <person name="O'Dell C.N."/>
            <person name="Oliver K."/>
            <person name="Palmeiri A."/>
            <person name="Palmer S.A."/>
            <person name="Parker A."/>
            <person name="Patel D."/>
            <person name="Pearce A.V."/>
            <person name="Peck A.I."/>
            <person name="Pelan S."/>
            <person name="Phelps K."/>
            <person name="Phillimore B.J."/>
            <person name="Plumb R."/>
            <person name="Rajan J."/>
            <person name="Raymond C."/>
            <person name="Rouse G."/>
            <person name="Saenphimmachak C."/>
            <person name="Sehra H.K."/>
            <person name="Sheridan E."/>
            <person name="Shownkeen R."/>
            <person name="Sims S."/>
            <person name="Skuce C.D."/>
            <person name="Smith M."/>
            <person name="Steward C."/>
            <person name="Subramanian S."/>
            <person name="Sycamore N."/>
            <person name="Tracey A."/>
            <person name="Tromans A."/>
            <person name="Van Helmond Z."/>
            <person name="Wall M."/>
            <person name="Wallis J.M."/>
            <person name="White S."/>
            <person name="Whitehead S.L."/>
            <person name="Wilkinson J.E."/>
            <person name="Willey D.L."/>
            <person name="Williams H."/>
            <person name="Wilming L."/>
            <person name="Wray P.W."/>
            <person name="Wu Z."/>
            <person name="Coulson A."/>
            <person name="Vaudin M."/>
            <person name="Sulston J.E."/>
            <person name="Durbin R.M."/>
            <person name="Hubbard T."/>
            <person name="Wooster R."/>
            <person name="Dunham I."/>
            <person name="Carter N.P."/>
            <person name="McVean G."/>
            <person name="Ross M.T."/>
            <person name="Harrow J."/>
            <person name="Olson M.V."/>
            <person name="Beck S."/>
            <person name="Rogers J."/>
            <person name="Bentley D.R."/>
        </authorList>
    </citation>
    <scope>NUCLEOTIDE SEQUENCE [LARGE SCALE GENOMIC DNA]</scope>
</reference>
<reference key="6">
    <citation type="submission" date="2005-09" db="EMBL/GenBank/DDBJ databases">
        <authorList>
            <person name="Mural R.J."/>
            <person name="Istrail S."/>
            <person name="Sutton G.G."/>
            <person name="Florea L."/>
            <person name="Halpern A.L."/>
            <person name="Mobarry C.M."/>
            <person name="Lippert R."/>
            <person name="Walenz B."/>
            <person name="Shatkay H."/>
            <person name="Dew I."/>
            <person name="Miller J.R."/>
            <person name="Flanigan M.J."/>
            <person name="Edwards N.J."/>
            <person name="Bolanos R."/>
            <person name="Fasulo D."/>
            <person name="Halldorsson B.V."/>
            <person name="Hannenhalli S."/>
            <person name="Turner R."/>
            <person name="Yooseph S."/>
            <person name="Lu F."/>
            <person name="Nusskern D.R."/>
            <person name="Shue B.C."/>
            <person name="Zheng X.H."/>
            <person name="Zhong F."/>
            <person name="Delcher A.L."/>
            <person name="Huson D.H."/>
            <person name="Kravitz S.A."/>
            <person name="Mouchard L."/>
            <person name="Reinert K."/>
            <person name="Remington K.A."/>
            <person name="Clark A.G."/>
            <person name="Waterman M.S."/>
            <person name="Eichler E.E."/>
            <person name="Adams M.D."/>
            <person name="Hunkapiller M.W."/>
            <person name="Myers E.W."/>
            <person name="Venter J.C."/>
        </authorList>
    </citation>
    <scope>NUCLEOTIDE SEQUENCE [LARGE SCALE GENOMIC DNA]</scope>
</reference>
<reference key="7">
    <citation type="journal article" date="2004" name="Genome Res.">
        <title>The status, quality, and expansion of the NIH full-length cDNA project: the Mammalian Gene Collection (MGC).</title>
        <authorList>
            <consortium name="The MGC Project Team"/>
        </authorList>
    </citation>
    <scope>NUCLEOTIDE SEQUENCE [LARGE SCALE MRNA]</scope>
    <scope>VARIANT CPT2D LEU-113</scope>
    <scope>VARIANTS ILE-368 AND VAL-647</scope>
    <source>
        <tissue>Skin</tissue>
        <tissue>Uterus</tissue>
    </source>
</reference>
<reference key="8">
    <citation type="journal article" date="1990" name="FEBS Lett.">
        <title>Purification, characterization and partial amino acid sequences of carnitine palmitoyl-transferase from human liver.</title>
        <authorList>
            <person name="Finocchiaro G."/>
            <person name="Colombo I."/>
            <person name="Didonato S."/>
        </authorList>
    </citation>
    <scope>PARTIAL PROTEIN SEQUENCE</scope>
    <source>
        <tissue>Liver</tissue>
    </source>
</reference>
<reference key="9">
    <citation type="journal article" date="2010" name="Biochim. Biophys. Acta">
        <title>Carnitine palmitoyltransferase 2: New insights on the substrate specificity and implications for acylcarnitine profiling.</title>
        <authorList>
            <person name="Violante S."/>
            <person name="Ijlst L."/>
            <person name="van Lenthe H."/>
            <person name="de Almeida I.T."/>
            <person name="Wanders R.J."/>
            <person name="Ventura F.V."/>
        </authorList>
    </citation>
    <scope>FUNCTION</scope>
    <scope>CATALYTIC ACTIVITY</scope>
    <scope>ACTIVITY REGULATION</scope>
    <scope>BIOPHYSICOCHEMICAL PROPERTIES</scope>
</reference>
<reference key="10">
    <citation type="journal article" date="2010" name="Sci. Signal.">
        <title>Quantitative phosphoproteomics reveals widespread full phosphorylation site occupancy during mitosis.</title>
        <authorList>
            <person name="Olsen J.V."/>
            <person name="Vermeulen M."/>
            <person name="Santamaria A."/>
            <person name="Kumar C."/>
            <person name="Miller M.L."/>
            <person name="Jensen L.J."/>
            <person name="Gnad F."/>
            <person name="Cox J."/>
            <person name="Jensen T.S."/>
            <person name="Nigg E.A."/>
            <person name="Brunak S."/>
            <person name="Mann M."/>
        </authorList>
    </citation>
    <scope>IDENTIFICATION BY MASS SPECTROMETRY [LARGE SCALE ANALYSIS]</scope>
    <source>
        <tissue>Cervix carcinoma</tissue>
    </source>
</reference>
<reference key="11">
    <citation type="journal article" date="2011" name="BMC Syst. Biol.">
        <title>Initial characterization of the human central proteome.</title>
        <authorList>
            <person name="Burkard T.R."/>
            <person name="Planyavsky M."/>
            <person name="Kaupe I."/>
            <person name="Breitwieser F.P."/>
            <person name="Buerckstuemmer T."/>
            <person name="Bennett K.L."/>
            <person name="Superti-Furga G."/>
            <person name="Colinge J."/>
        </authorList>
    </citation>
    <scope>IDENTIFICATION BY MASS SPECTROMETRY [LARGE SCALE ANALYSIS]</scope>
</reference>
<reference key="12">
    <citation type="journal article" date="2014" name="J. Proteomics">
        <title>An enzyme assisted RP-RPLC approach for in-depth analysis of human liver phosphoproteome.</title>
        <authorList>
            <person name="Bian Y."/>
            <person name="Song C."/>
            <person name="Cheng K."/>
            <person name="Dong M."/>
            <person name="Wang F."/>
            <person name="Huang J."/>
            <person name="Sun D."/>
            <person name="Wang L."/>
            <person name="Ye M."/>
            <person name="Zou H."/>
        </authorList>
    </citation>
    <scope>IDENTIFICATION BY MASS SPECTROMETRY [LARGE SCALE ANALYSIS]</scope>
    <source>
        <tissue>Liver</tissue>
    </source>
</reference>
<reference key="13">
    <citation type="journal article" date="2015" name="Proteomics">
        <title>N-terminome analysis of the human mitochondrial proteome.</title>
        <authorList>
            <person name="Vaca Jacome A.S."/>
            <person name="Rabilloud T."/>
            <person name="Schaeffer-Reiss C."/>
            <person name="Rompais M."/>
            <person name="Ayoub D."/>
            <person name="Lane L."/>
            <person name="Bairoch A."/>
            <person name="Van Dorsselaer A."/>
            <person name="Carapito C."/>
        </authorList>
    </citation>
    <scope>IDENTIFICATION BY MASS SPECTROMETRY [LARGE SCALE ANALYSIS]</scope>
</reference>
<reference key="14">
    <citation type="journal article" date="1992" name="Am. J. Hum. Genet.">
        <title>Lethal carnitine palmitoyltransferase (CPT) II deficiency in newborns: a molecular-genetic study.</title>
        <authorList>
            <person name="Taroni F."/>
            <person name="Gellera C."/>
            <person name="Cavadini P."/>
            <person name="Baratta S."/>
            <person name="Lamantea E."/>
            <person name="Dethlefs S."/>
            <person name="Didonato S."/>
            <person name="Reik R.A."/>
            <person name="Benke P.J."/>
        </authorList>
    </citation>
    <scope>VARIANT CPT2D LEU-227</scope>
</reference>
<reference key="15">
    <citation type="journal article" date="1992" name="Proc. Natl. Acad. Sci. U.S.A.">
        <title>Molecular characterization of inherited carnitine palmitoyltransferase II deficiency.</title>
        <authorList>
            <person name="Taroni F."/>
            <person name="Verderio E."/>
            <person name="Fiorucci S."/>
            <person name="Cavadini P."/>
            <person name="Finocchiaro G."/>
            <person name="Uziel G."/>
            <person name="Lamantea E."/>
            <person name="Gellera C."/>
            <person name="Didonato S."/>
        </authorList>
    </citation>
    <scope>INVOLVEMENT IN CPT2DI</scope>
    <scope>VARIANT CPT2DI CYS-631</scope>
    <scope>VARIANTS ILE-368 AND VAL-647</scope>
</reference>
<reference key="16">
    <citation type="journal article" date="1993" name="Nat. Genet.">
        <title>Identification of a common mutation in the carnitine palmitoyltransferase II gene in familial recurrent myoglobinuria patients.</title>
        <authorList>
            <person name="Taroni F."/>
            <person name="Verderio E."/>
            <person name="Dworzak F."/>
            <person name="Willems P.J."/>
            <person name="Cavadini P."/>
            <person name="Didonato S."/>
        </authorList>
    </citation>
    <scope>VARIANT CPT2D LEU-113</scope>
</reference>
<reference key="17">
    <citation type="journal article" date="1996" name="Am. J. Hum. Genet.">
        <title>Molecular analysis of carnitine palmitoyltransferase II deficiency with hepatocardiomuscular expression.</title>
        <authorList>
            <person name="Bonnefont J.-P."/>
            <person name="Taroni F."/>
            <person name="Cavadini P."/>
            <person name="Cepanec C."/>
            <person name="Brivet M."/>
            <person name="Saudubray J.-M."/>
            <person name="Leroux J.-P."/>
            <person name="Demaugre F."/>
        </authorList>
    </citation>
    <scope>INVOLVEMENT IN CPT2DI</scope>
    <scope>VARIANT CPT2DI SER-628</scope>
</reference>
<reference key="18">
    <citation type="journal article" date="1997" name="Ann. Neurol.">
        <title>Carnitine palmityltransferase II deficiency: three novel mutations.</title>
        <authorList>
            <person name="Wieser T."/>
            <person name="Deschauer M."/>
            <person name="Zierz S."/>
        </authorList>
    </citation>
    <scope>VARIANTS CPT2D THR-214; LEU-448 AND PHE-479</scope>
</reference>
<reference key="19">
    <citation type="journal article" date="1998" name="Hum. Mutat.">
        <title>Two CPT2 mutations in three Japanese patients with carnitine palmitoyltransferase II deficiency: functional analysis and association with polymorphic haplotypes and two clinical phenotypes.</title>
        <authorList>
            <person name="Wataya K."/>
            <person name="Akanuma J."/>
            <person name="Cavadini P."/>
            <person name="Aoki Y."/>
            <person name="Kure S."/>
            <person name="Invernizzi F."/>
            <person name="Yoshida I."/>
            <person name="Kira J."/>
            <person name="Taroni F."/>
            <person name="Matsubara Y."/>
            <person name="Narisawa K."/>
        </authorList>
    </citation>
    <scope>VARIANTS CPT2D LYS-174 AND TYR-383</scope>
    <scope>VARIANTS CYS-352; ILE-368 AND VAL-647</scope>
</reference>
<reference key="20">
    <citation type="journal article" date="1998" name="Mol. Genet. Metab.">
        <title>Identification of four novel mutations in patients with carnitine palmitoyltransferase II (CPT II) deficiency.</title>
        <authorList>
            <person name="Yang B.-Z."/>
            <person name="Ding J.-H."/>
            <person name="Dewese T."/>
            <person name="Roe D."/>
            <person name="He G."/>
            <person name="Wilkinson J."/>
            <person name="Day D.W."/>
            <person name="Demaugre F."/>
            <person name="Rabier D."/>
            <person name="Brivet M."/>
            <person name="Roe C."/>
        </authorList>
    </citation>
    <scope>VARIANTS CPT2D LEU-113; GLN-151; LEU-227; ARG-550 AND SER-604</scope>
    <scope>VARIANTS ILE-368 AND VAL-647</scope>
</reference>
<reference key="21">
    <citation type="journal article" date="1999" name="Hum. Mutat.">
        <title>Novel mutations associated with carnitine palmitoyltransferase II deficiency.</title>
        <authorList>
            <person name="Taggart R.T."/>
            <person name="Smail D."/>
            <person name="Apolito C."/>
            <person name="Vladutiu G.D."/>
        </authorList>
    </citation>
    <scope>VARIANTS CPT2D CYS-503 AND ASP-549</scope>
</reference>
<reference key="22">
    <citation type="journal article" date="2001" name="Am. J. Med. Genet.">
        <title>Antenatal presentation of carnitine palmitoyltransferase II deficiency.</title>
        <authorList>
            <person name="Elpeleg O.N."/>
            <person name="Hammerman C."/>
            <person name="Saada A."/>
            <person name="Shaag A."/>
            <person name="Golzand E."/>
            <person name="Hochner-Celnikier D."/>
            <person name="Berger I."/>
            <person name="Nadjari M."/>
        </authorList>
    </citation>
    <scope>INVOLVEMENT IN CPT2DLN</scope>
</reference>
<reference key="23">
    <citation type="journal article" date="2003" name="J. Inherit. Metab. Dis.">
        <title>Mutation and biochemical analysis in carnitine palmitoyltransferase type II (CPT II) deficiency.</title>
        <authorList>
            <person name="Olpin S.E."/>
            <person name="Afifi A."/>
            <person name="Clark S."/>
            <person name="Manning N.J."/>
            <person name="Bonham J.R."/>
            <person name="Dalton A."/>
            <person name="Leonard J.V."/>
            <person name="Land J.M."/>
            <person name="Andresen B.S."/>
            <person name="Morris A.A."/>
            <person name="Muntoni F."/>
            <person name="Turnbull D."/>
            <person name="Pourfarzam M."/>
            <person name="Rahman S."/>
            <person name="Pollitt R.J."/>
        </authorList>
    </citation>
    <scope>VARIANTS CPT2D GLN-151; ASP-210; GLN-296 AND ARG-600</scope>
    <scope>VARIANTS ILE-368 AND VAL-647</scope>
</reference>
<reference key="24">
    <citation type="journal article" date="2003" name="Lab. Invest.">
        <title>Carnitine palmitoyltransferase II deficiency: a clinical, biochemical, and molecular review.</title>
        <authorList>
            <person name="Sigauke E."/>
            <person name="Rakheja D."/>
            <person name="Kitson K."/>
            <person name="Bennett M.J."/>
        </authorList>
    </citation>
    <scope>VARIANT CPT2D GLN-296</scope>
</reference>
<reference key="25">
    <citation type="journal article" date="2005" name="Ann. Neurol.">
        <title>Fuel utilization in subjects with carnitine palmitoyltransferase 2 gene mutations.</title>
        <authorList>
            <person name="Oerngreen M.C."/>
            <person name="Dunoe M."/>
            <person name="Ejstrup R."/>
            <person name="Christensen E."/>
            <person name="Schwartz M."/>
            <person name="Sacchetti M."/>
            <person name="Vissing J."/>
        </authorList>
    </citation>
    <scope>VARIANTS CPT2D HIS-50; LEU-113 AND GLY-213</scope>
</reference>
<reference key="26">
    <citation type="journal article" date="2005" name="FEBS Lett.">
        <title>Thermolabile phenotype of carnitine palmitoyltransferase II variations as a predisposing factor for influenza-associated encephalopathy.</title>
        <authorList>
            <person name="Chen Y."/>
            <person name="Mizuguchi H."/>
            <person name="Yao D."/>
            <person name="Ide M."/>
            <person name="Kuroda Y."/>
            <person name="Shigematsu Y."/>
            <person name="Yamaguchi S."/>
            <person name="Yamaguchi M."/>
            <person name="Kinoshita M."/>
            <person name="Kido H."/>
        </authorList>
    </citation>
    <scope>ASSOCIATION OF VARIANTS CYS-352 AND ILE-368 WITH SUSCEPTIBILITY TO IIAE4</scope>
</reference>
<reference key="27">
    <citation type="journal article" date="2007" name="J. Proteome Res.">
        <title>Detection and validation of non-synonymous coding SNPs from orthogonal analysis of shotgun proteomics data.</title>
        <authorList>
            <person name="Bunger M.K."/>
            <person name="Cargile B.J."/>
            <person name="Sevinsky J.R."/>
            <person name="Deyanova E."/>
            <person name="Yates N.A."/>
            <person name="Hendrickson R.C."/>
            <person name="Stephenson J.L. Jr."/>
        </authorList>
    </citation>
    <scope>VARIANT VAL-647</scope>
    <scope>IDENTIFICATION BY MASS SPECTROMETRY</scope>
</reference>
<reference key="28">
    <citation type="journal article" date="2008" name="Hum. Mutat.">
        <title>Thermal instability of compound variants of carnitine palmitoyltransferase II and impaired mitochondrial fuel utilization in influenza-associated encephalopathy.</title>
        <authorList>
            <person name="Yao D."/>
            <person name="Mizuguchi H."/>
            <person name="Yamaguchi M."/>
            <person name="Yamada H."/>
            <person name="Chida J."/>
            <person name="Shikata K."/>
            <person name="Kido H."/>
        </authorList>
    </citation>
    <scope>VARIANTS CYS-352; ILE-368; LEU-504; LEU-605 AND VAL-647</scope>
    <scope>CHARACTERIZATION OF VARIANTS CYS-352 AND ILE-368</scope>
</reference>
<reference key="29">
    <citation type="journal article" date="2011" name="J. Hum. Genet.">
        <title>Fatal viral infection-associated encephalopathy in two Chinese boys: a genetically determined risk factor of thermolabile carnitine palmitoyltransferase II variants.</title>
        <authorList>
            <person name="Mak C.M."/>
            <person name="Lam C.W."/>
            <person name="Fong N.C."/>
            <person name="Siu W.K."/>
            <person name="Lee H.C."/>
            <person name="Siu T.S."/>
            <person name="Lai C.K."/>
            <person name="Law C.Y."/>
            <person name="Tong S.F."/>
            <person name="Poon W.T."/>
            <person name="Lam D.S."/>
            <person name="Ng H.L."/>
            <person name="Yuen Y.P."/>
            <person name="Tam S."/>
            <person name="Que T.L."/>
            <person name="Kwong N.S."/>
            <person name="Chan A.Y."/>
        </authorList>
    </citation>
    <scope>ASSOCIATION OF VARIANTS CYS-352 AND ILE-368 WITH SUSCEPTIBILITY TO IIAE4</scope>
</reference>
<reference key="30">
    <citation type="journal article" date="2014" name="Biochem. Biophys. Res. Commun.">
        <title>Functional analysis of iPSC-derived myocytes from a patient with carnitine palmitoyltransferase II deficiency.</title>
        <authorList>
            <person name="Yasuno T."/>
            <person name="Osafune K."/>
            <person name="Sakurai H."/>
            <person name="Asaka I."/>
            <person name="Tanaka A."/>
            <person name="Yamaguchi S."/>
            <person name="Yamada K."/>
            <person name="Hitomi H."/>
            <person name="Arai S."/>
            <person name="Kurose Y."/>
            <person name="Higaki Y."/>
            <person name="Sudo M."/>
            <person name="Ando S."/>
            <person name="Nakashima H."/>
            <person name="Saito T."/>
            <person name="Kaneoka H."/>
        </authorList>
    </citation>
    <scope>INVOLVEMENT IN CPT2D</scope>
    <scope>FUNCTION</scope>
    <scope>CATALYTIC ACTIVITY</scope>
    <scope>VARIANT CPT2D CYS-631</scope>
</reference>
<organism>
    <name type="scientific">Homo sapiens</name>
    <name type="common">Human</name>
    <dbReference type="NCBI Taxonomy" id="9606"/>
    <lineage>
        <taxon>Eukaryota</taxon>
        <taxon>Metazoa</taxon>
        <taxon>Chordata</taxon>
        <taxon>Craniata</taxon>
        <taxon>Vertebrata</taxon>
        <taxon>Euteleostomi</taxon>
        <taxon>Mammalia</taxon>
        <taxon>Eutheria</taxon>
        <taxon>Euarchontoglires</taxon>
        <taxon>Primates</taxon>
        <taxon>Haplorrhini</taxon>
        <taxon>Catarrhini</taxon>
        <taxon>Hominidae</taxon>
        <taxon>Homo</taxon>
    </lineage>
</organism>
<gene>
    <name evidence="25" type="primary">CPT2</name>
    <name type="synonym">CPT1</name>
</gene>
<evidence type="ECO:0000250" key="1"/>
<evidence type="ECO:0000250" key="2">
    <source>
        <dbReference type="UniProtKB" id="P52825"/>
    </source>
</evidence>
<evidence type="ECO:0000269" key="3">
    <source>
    </source>
</evidence>
<evidence type="ECO:0000269" key="4">
    <source>
    </source>
</evidence>
<evidence type="ECO:0000269" key="5">
    <source>
    </source>
</evidence>
<evidence type="ECO:0000269" key="6">
    <source>
    </source>
</evidence>
<evidence type="ECO:0000269" key="7">
    <source>
    </source>
</evidence>
<evidence type="ECO:0000269" key="8">
    <source>
    </source>
</evidence>
<evidence type="ECO:0000269" key="9">
    <source>
    </source>
</evidence>
<evidence type="ECO:0000269" key="10">
    <source>
    </source>
</evidence>
<evidence type="ECO:0000269" key="11">
    <source>
    </source>
</evidence>
<evidence type="ECO:0000269" key="12">
    <source>
    </source>
</evidence>
<evidence type="ECO:0000269" key="13">
    <source>
    </source>
</evidence>
<evidence type="ECO:0000269" key="14">
    <source>
    </source>
</evidence>
<evidence type="ECO:0000269" key="15">
    <source>
    </source>
</evidence>
<evidence type="ECO:0000269" key="16">
    <source>
    </source>
</evidence>
<evidence type="ECO:0000269" key="17">
    <source>
    </source>
</evidence>
<evidence type="ECO:0000269" key="18">
    <source>
    </source>
</evidence>
<evidence type="ECO:0000269" key="19">
    <source>
    </source>
</evidence>
<evidence type="ECO:0000269" key="20">
    <source>
    </source>
</evidence>
<evidence type="ECO:0000269" key="21">
    <source ref="14"/>
</evidence>
<evidence type="ECO:0000269" key="22">
    <source ref="18"/>
</evidence>
<evidence type="ECO:0000305" key="23"/>
<evidence type="ECO:0000305" key="24">
    <source>
    </source>
</evidence>
<evidence type="ECO:0000312" key="25">
    <source>
        <dbReference type="HGNC" id="HGNC:2330"/>
    </source>
</evidence>
<comment type="function">
    <text evidence="13 15">Involved in the intramitochondrial synthesis of acylcarnitines from accumulated acyl-CoA metabolites (PubMed:20538056, PubMed:24780397). Reconverts acylcarnitines back into the respective acyl-CoA esters that can then undergo beta-oxidation, an essential step for the mitochondrial uptake of long-chain fatty acids and their subsequent beta-oxidation in the mitochondrion. Active with medium (C8-C12) and long-chain (C14-C18) acyl-CoA esters (PubMed:20538056).</text>
</comment>
<comment type="catalytic activity">
    <reaction evidence="13 15">
        <text>(R)-carnitine + hexadecanoyl-CoA = O-hexadecanoyl-(R)-carnitine + CoA</text>
        <dbReference type="Rhea" id="RHEA:12661"/>
        <dbReference type="ChEBI" id="CHEBI:16347"/>
        <dbReference type="ChEBI" id="CHEBI:17490"/>
        <dbReference type="ChEBI" id="CHEBI:57287"/>
        <dbReference type="ChEBI" id="CHEBI:57379"/>
        <dbReference type="EC" id="2.3.1.21"/>
    </reaction>
    <physiologicalReaction direction="right-to-left" evidence="24">
        <dbReference type="Rhea" id="RHEA:12663"/>
    </physiologicalReaction>
</comment>
<comment type="catalytic activity">
    <reaction evidence="13">
        <text>octanoyl-CoA + (R)-carnitine = O-octanoyl-(R)-carnitine + CoA</text>
        <dbReference type="Rhea" id="RHEA:17177"/>
        <dbReference type="ChEBI" id="CHEBI:16347"/>
        <dbReference type="ChEBI" id="CHEBI:18102"/>
        <dbReference type="ChEBI" id="CHEBI:57287"/>
        <dbReference type="ChEBI" id="CHEBI:57386"/>
    </reaction>
</comment>
<comment type="catalytic activity">
    <reaction evidence="13">
        <text>decanoyl-CoA + (R)-carnitine = O-decanoyl-(R)-carnitine + CoA</text>
        <dbReference type="Rhea" id="RHEA:44828"/>
        <dbReference type="ChEBI" id="CHEBI:16347"/>
        <dbReference type="ChEBI" id="CHEBI:28717"/>
        <dbReference type="ChEBI" id="CHEBI:57287"/>
        <dbReference type="ChEBI" id="CHEBI:61430"/>
    </reaction>
</comment>
<comment type="catalytic activity">
    <reaction evidence="13">
        <text>dodecanoyl-CoA + (R)-carnitine = O-dodecanoyl-R-carnitine + CoA</text>
        <dbReference type="Rhea" id="RHEA:40279"/>
        <dbReference type="ChEBI" id="CHEBI:16347"/>
        <dbReference type="ChEBI" id="CHEBI:57287"/>
        <dbReference type="ChEBI" id="CHEBI:57375"/>
        <dbReference type="ChEBI" id="CHEBI:77086"/>
    </reaction>
</comment>
<comment type="catalytic activity">
    <reaction evidence="13">
        <text>tetradecanoyl-CoA + (R)-carnitine = O-tetradecanoyl-(R)-carnitine + CoA</text>
        <dbReference type="Rhea" id="RHEA:44832"/>
        <dbReference type="ChEBI" id="CHEBI:16347"/>
        <dbReference type="ChEBI" id="CHEBI:57287"/>
        <dbReference type="ChEBI" id="CHEBI:57385"/>
        <dbReference type="ChEBI" id="CHEBI:84634"/>
    </reaction>
</comment>
<comment type="catalytic activity">
    <reaction evidence="13">
        <text>(R)-carnitine + octadecanoyl-CoA = O-octadecanoyl-(R)-carnitine + CoA</text>
        <dbReference type="Rhea" id="RHEA:44840"/>
        <dbReference type="ChEBI" id="CHEBI:16347"/>
        <dbReference type="ChEBI" id="CHEBI:57287"/>
        <dbReference type="ChEBI" id="CHEBI:57394"/>
        <dbReference type="ChEBI" id="CHEBI:84644"/>
    </reaction>
</comment>
<comment type="catalytic activity">
    <reaction evidence="13">
        <text>eicosanoyl-CoA + (R)-carnitine = O-eicosanoyl-(R)-carnitine + CoA</text>
        <dbReference type="Rhea" id="RHEA:44844"/>
        <dbReference type="ChEBI" id="CHEBI:16347"/>
        <dbReference type="ChEBI" id="CHEBI:57287"/>
        <dbReference type="ChEBI" id="CHEBI:57380"/>
        <dbReference type="ChEBI" id="CHEBI:84645"/>
    </reaction>
</comment>
<comment type="catalytic activity">
    <reaction evidence="13">
        <text>(9Z)-tetradecenoyl-CoA + (R)-carnitine = O-(9Z)-tetradecenoyl-(R)-carnitine + CoA</text>
        <dbReference type="Rhea" id="RHEA:44848"/>
        <dbReference type="ChEBI" id="CHEBI:16347"/>
        <dbReference type="ChEBI" id="CHEBI:57287"/>
        <dbReference type="ChEBI" id="CHEBI:65060"/>
        <dbReference type="ChEBI" id="CHEBI:84647"/>
    </reaction>
</comment>
<comment type="catalytic activity">
    <reaction evidence="13">
        <text>(5Z)-tetradecenoyl-CoA + (R)-carnitine = O-(5Z)-tetradecenoyl-(R)-carnitine + CoA</text>
        <dbReference type="Rhea" id="RHEA:44852"/>
        <dbReference type="ChEBI" id="CHEBI:16347"/>
        <dbReference type="ChEBI" id="CHEBI:57287"/>
        <dbReference type="ChEBI" id="CHEBI:84649"/>
        <dbReference type="ChEBI" id="CHEBI:84650"/>
    </reaction>
</comment>
<comment type="catalytic activity">
    <reaction evidence="13">
        <text>(R)-carnitine + (9Z)-octadecenoyl-CoA = O-(9Z)-octadecenoyl-(R)-carnitine + CoA</text>
        <dbReference type="Rhea" id="RHEA:44856"/>
        <dbReference type="ChEBI" id="CHEBI:16347"/>
        <dbReference type="ChEBI" id="CHEBI:57287"/>
        <dbReference type="ChEBI" id="CHEBI:57387"/>
        <dbReference type="ChEBI" id="CHEBI:84651"/>
    </reaction>
</comment>
<comment type="catalytic activity">
    <reaction evidence="13">
        <text>4,8-dimethylnonanoyl-CoA + (R)-carnitine = O-4,8-dimethylnonanoyl-(R)-carnitine + CoA</text>
        <dbReference type="Rhea" id="RHEA:44860"/>
        <dbReference type="ChEBI" id="CHEBI:16347"/>
        <dbReference type="ChEBI" id="CHEBI:57287"/>
        <dbReference type="ChEBI" id="CHEBI:77061"/>
        <dbReference type="ChEBI" id="CHEBI:84654"/>
    </reaction>
</comment>
<comment type="activity regulation">
    <text evidence="13">Inhibited by trans-2-hexadecanoyl-CoA.</text>
</comment>
<comment type="biophysicochemical properties">
    <kinetics>
        <KM evidence="13">7.1 uM for hexadecanoyl-CoA</KM>
        <KM evidence="13">8.1 uM for trans-2-hexadecanoyl-CoA</KM>
        <Vmax evidence="13">1156.0 pmol/min/mg enzyme toward</Vmax>
        <Vmax evidence="13">77.0 pmol/min/mg enzyme toward trans-2-hexadecanoyl-CoA</Vmax>
    </kinetics>
</comment>
<comment type="pathway">
    <text evidence="13">Lipid metabolism; fatty acid beta-oxidation.</text>
</comment>
<comment type="interaction">
    <interactant intactId="EBI-6269566">
        <id>P23786</id>
    </interactant>
    <interactant intactId="EBI-3867333">
        <id>A8MQ03</id>
        <label>CYSRT1</label>
    </interactant>
    <organismsDiffer>false</organismsDiffer>
    <experiments>3</experiments>
</comment>
<comment type="interaction">
    <interactant intactId="EBI-6269566">
        <id>P23786</id>
    </interactant>
    <interactant intactId="EBI-14404755">
        <id>Q96AQ8</id>
        <label>MCUR1</label>
    </interactant>
    <organismsDiffer>false</organismsDiffer>
    <experiments>2</experiments>
</comment>
<comment type="interaction">
    <interactant intactId="EBI-6269566">
        <id>P23786</id>
    </interactant>
    <interactant intactId="EBI-740446">
        <id>P32242</id>
        <label>OTX1</label>
    </interactant>
    <organismsDiffer>false</organismsDiffer>
    <experiments>3</experiments>
</comment>
<comment type="subcellular location">
    <subcellularLocation>
        <location>Mitochondrion inner membrane</location>
        <topology>Peripheral membrane protein</topology>
        <orientation>Matrix side</orientation>
    </subcellularLocation>
</comment>
<comment type="disease" evidence="3 4 5 6 7 8 9 15 16 17 18 19 20 21 22">
    <disease id="DI-01322">
        <name>Carnitine palmitoyltransferase 2 deficiency, myopathic, stress-induced</name>
        <acronym>CPT2D</acronym>
        <description>An autosomal recessive disorder of mitochondrial long-chain fatty acid oxidation, characterized by recurrent myoglobinuria, episodes of muscle pain, stiffness, and rhabdomyolysis. These symptoms are exacerbated by prolonged exercise, fasting, cold, or viral infection. CPT2DM affects most frequently children or young adults, and severity of attacks is highly variable. Myoglobinuria can cause kidney failure and death.</description>
        <dbReference type="MIM" id="255110"/>
    </disease>
    <text>The disease is caused by variants affecting the gene represented in this entry.</text>
</comment>
<comment type="disease" evidence="7 18">
    <disease id="DI-03089">
        <name>Carnitine palmitoyltransferase 2 deficiency, infantile</name>
        <acronym>CPT2DI</acronym>
        <description>An autosomal recessive disorder of mitochondrial long-chain fatty acid oxidation, characterized by hepatic or hepato-cardio-muscular manifestations with onset in infancy. Clinical features include hypoketotic hypoglycemia, lethargy, seizures, hepatomegaly, liver dysfunction, cardiomegaly and dilated cardiomyopathy.</description>
        <dbReference type="MIM" id="600649"/>
    </disease>
    <text>The disease is caused by variants affecting the gene represented in this entry.</text>
</comment>
<comment type="disease" evidence="4">
    <disease id="DI-01323">
        <name>Carnitine palmitoyltransferase 2 deficiency, lethal neonatal</name>
        <acronym>CPT2DLN</acronym>
        <description>An autosomal recessive disorder of mitochondrial long-chain fatty acid oxidation with fatal outcome, presenting shortly after birth. It is characterized by respiratory distress, seizures, altered mental status, hepatomegaly, cardiomegaly, cardiac arrhythmia, and, in many cases, dysmorphic features, renal dysgenesis, and migration defects. recessive.</description>
        <dbReference type="MIM" id="608836"/>
    </disease>
    <text>The disease is caused by variants affecting the gene represented in this entry.</text>
</comment>
<comment type="disease" evidence="10 14">
    <disease id="DI-03272">
        <name>Encephalopathy, acute, infection-induced, 4</name>
        <acronym>IIAE4</acronym>
        <description>A severe neurologic complication of an infection. It manifests within days in otherwise healthy children after common viral infections, without evidence of viral infection of the brain or inflammatory cell infiltration. In affected children, high-grade fever is accompanied within 12 to 48 hours by febrile convulsions, often leading to coma, multiple-organ failure, brain edema, and high morbidity and mortality. The infections are usually viral, particularly influenza, although other viruses and even mycoplasma have been found to cause the disorder.</description>
        <dbReference type="MIM" id="614212"/>
    </disease>
    <text evidence="14">Disease susceptibility is associated with variants affecting the gene represented in this entry. CPT2 polymorphic variants do not cause classical carnitine palmitoyltransferase 2 deficiency, and patients harboring any of them are asymptomatic most of the time. However, they are prone to viral infection (high fever)-related encephalopathy (PubMed:21697855).</text>
</comment>
<comment type="similarity">
    <text evidence="23">Belongs to the carnitine/choline acetyltransferase family.</text>
</comment>
<name>CPT2_HUMAN</name>
<protein>
    <recommendedName>
        <fullName evidence="23">Carnitine O-palmitoyltransferase 2, mitochondrial</fullName>
        <ecNumber evidence="13">2.3.1.21</ecNumber>
    </recommendedName>
    <alternativeName>
        <fullName>Carnitine palmitoyltransferase II</fullName>
        <shortName>CPT II</shortName>
    </alternativeName>
</protein>